<accession>P62650</accession>
<accession>Q74MP6</accession>
<keyword id="KW-1185">Reference proteome</keyword>
<keyword id="KW-0687">Ribonucleoprotein</keyword>
<keyword id="KW-0689">Ribosomal protein</keyword>
<keyword id="KW-0694">RNA-binding</keyword>
<keyword id="KW-0699">rRNA-binding</keyword>
<name>RL22_NANEQ</name>
<sequence>MRYSVSLENVAKLYAHNLPISTKHAVEIAKMIRYLPLQLAKEMLQKVLDKELAVPFFRYNRDIPHRKKGQIHPYFKIKHGRFPENATKWILKELNSVEKNAINLGMDPNKLFIVHIAAHKGVRGYTSVYGRRARRKATHLEIMVAENKDYDPSKKYPLKELKRMGHKLFLSLKK</sequence>
<proteinExistence type="inferred from homology"/>
<feature type="chain" id="PRO_0000125280" description="Large ribosomal subunit protein uL22">
    <location>
        <begin position="1"/>
        <end position="174"/>
    </location>
</feature>
<reference key="1">
    <citation type="journal article" date="2003" name="Proc. Natl. Acad. Sci. U.S.A.">
        <title>The genome of Nanoarchaeum equitans: insights into early archaeal evolution and derived parasitism.</title>
        <authorList>
            <person name="Waters E."/>
            <person name="Hohn M.J."/>
            <person name="Ahel I."/>
            <person name="Graham D.E."/>
            <person name="Adams M.D."/>
            <person name="Barnstead M."/>
            <person name="Beeson K.Y."/>
            <person name="Bibbs L."/>
            <person name="Bolanos R."/>
            <person name="Keller M."/>
            <person name="Kretz K."/>
            <person name="Lin X."/>
            <person name="Mathur E."/>
            <person name="Ni J."/>
            <person name="Podar M."/>
            <person name="Richardson T."/>
            <person name="Sutton G.G."/>
            <person name="Simon M."/>
            <person name="Soell D."/>
            <person name="Stetter K.O."/>
            <person name="Short J.M."/>
            <person name="Noorderwier M."/>
        </authorList>
    </citation>
    <scope>NUCLEOTIDE SEQUENCE [LARGE SCALE GENOMIC DNA]</scope>
    <source>
        <strain>Kin4-M</strain>
    </source>
</reference>
<evidence type="ECO:0000255" key="1">
    <source>
        <dbReference type="HAMAP-Rule" id="MF_01331"/>
    </source>
</evidence>
<evidence type="ECO:0000305" key="2"/>
<organism>
    <name type="scientific">Nanoarchaeum equitans (strain Kin4-M)</name>
    <dbReference type="NCBI Taxonomy" id="228908"/>
    <lineage>
        <taxon>Archaea</taxon>
        <taxon>Nanobdellota</taxon>
        <taxon>Candidatus Nanoarchaeia</taxon>
        <taxon>Nanoarchaeales</taxon>
        <taxon>Nanoarchaeaceae</taxon>
        <taxon>Nanoarchaeum</taxon>
    </lineage>
</organism>
<dbReference type="EMBL" id="AE017199">
    <property type="protein sequence ID" value="AAR39056.1"/>
    <property type="molecule type" value="Genomic_DNA"/>
</dbReference>
<dbReference type="SMR" id="P62650"/>
<dbReference type="STRING" id="228908.NEQ204"/>
<dbReference type="EnsemblBacteria" id="AAR39056">
    <property type="protein sequence ID" value="AAR39056"/>
    <property type="gene ID" value="NEQ204"/>
</dbReference>
<dbReference type="KEGG" id="neq:NEQ204"/>
<dbReference type="HOGENOM" id="CLU_083987_0_2_2"/>
<dbReference type="Proteomes" id="UP000000578">
    <property type="component" value="Chromosome"/>
</dbReference>
<dbReference type="GO" id="GO:0022625">
    <property type="term" value="C:cytosolic large ribosomal subunit"/>
    <property type="evidence" value="ECO:0007669"/>
    <property type="project" value="TreeGrafter"/>
</dbReference>
<dbReference type="GO" id="GO:0019843">
    <property type="term" value="F:rRNA binding"/>
    <property type="evidence" value="ECO:0007669"/>
    <property type="project" value="UniProtKB-UniRule"/>
</dbReference>
<dbReference type="GO" id="GO:0003735">
    <property type="term" value="F:structural constituent of ribosome"/>
    <property type="evidence" value="ECO:0007669"/>
    <property type="project" value="InterPro"/>
</dbReference>
<dbReference type="GO" id="GO:0002181">
    <property type="term" value="P:cytoplasmic translation"/>
    <property type="evidence" value="ECO:0007669"/>
    <property type="project" value="TreeGrafter"/>
</dbReference>
<dbReference type="Gene3D" id="3.90.470.10">
    <property type="entry name" value="Ribosomal protein L22/L17"/>
    <property type="match status" value="1"/>
</dbReference>
<dbReference type="HAMAP" id="MF_01331_A">
    <property type="entry name" value="Ribosomal_uL22_A"/>
    <property type="match status" value="1"/>
</dbReference>
<dbReference type="InterPro" id="IPR001063">
    <property type="entry name" value="Ribosomal_uL22"/>
</dbReference>
<dbReference type="InterPro" id="IPR005721">
    <property type="entry name" value="Ribosomal_uL22_euk/arc"/>
</dbReference>
<dbReference type="InterPro" id="IPR036394">
    <property type="entry name" value="Ribosomal_uL22_sf"/>
</dbReference>
<dbReference type="NCBIfam" id="NF003260">
    <property type="entry name" value="PRK04223.1"/>
    <property type="match status" value="1"/>
</dbReference>
<dbReference type="NCBIfam" id="TIGR01038">
    <property type="entry name" value="uL22_arch_euk"/>
    <property type="match status" value="1"/>
</dbReference>
<dbReference type="PANTHER" id="PTHR11593">
    <property type="entry name" value="60S RIBOSOMAL PROTEIN L17"/>
    <property type="match status" value="1"/>
</dbReference>
<dbReference type="PANTHER" id="PTHR11593:SF10">
    <property type="entry name" value="60S RIBOSOMAL PROTEIN L17"/>
    <property type="match status" value="1"/>
</dbReference>
<dbReference type="Pfam" id="PF00237">
    <property type="entry name" value="Ribosomal_L22"/>
    <property type="match status" value="1"/>
</dbReference>
<dbReference type="SUPFAM" id="SSF54843">
    <property type="entry name" value="Ribosomal protein L22"/>
    <property type="match status" value="1"/>
</dbReference>
<comment type="function">
    <text evidence="1">This protein binds specifically to 23S rRNA. It makes multiple contacts with different domains of the 23S rRNA in the assembled 50S subunit and ribosome.</text>
</comment>
<comment type="function">
    <text evidence="1">The globular domain of the protein is located near the polypeptide exit tunnel on the outside of the subunit, while an extended beta-hairpin is found that lines the wall of the exit tunnel in the center of the 70S ribosome.</text>
</comment>
<comment type="subunit">
    <text evidence="1">Part of the 50S ribosomal subunit.</text>
</comment>
<comment type="similarity">
    <text evidence="1">Belongs to the universal ribosomal protein uL22 family.</text>
</comment>
<gene>
    <name evidence="1" type="primary">rpl22</name>
    <name type="ordered locus">NEQ204</name>
</gene>
<protein>
    <recommendedName>
        <fullName evidence="1">Large ribosomal subunit protein uL22</fullName>
    </recommendedName>
    <alternativeName>
        <fullName evidence="2">50S ribosomal protein L22</fullName>
    </alternativeName>
</protein>